<feature type="chain" id="PRO_0000092774" description="Phosphate import ATP-binding protein PstB">
    <location>
        <begin position="1"/>
        <end position="271"/>
    </location>
</feature>
<feature type="domain" description="ABC transporter" evidence="1">
    <location>
        <begin position="25"/>
        <end position="266"/>
    </location>
</feature>
<feature type="binding site" evidence="1">
    <location>
        <begin position="57"/>
        <end position="64"/>
    </location>
    <ligand>
        <name>ATP</name>
        <dbReference type="ChEBI" id="CHEBI:30616"/>
    </ligand>
</feature>
<name>PSTB_BACCZ</name>
<keyword id="KW-0067">ATP-binding</keyword>
<keyword id="KW-1003">Cell membrane</keyword>
<keyword id="KW-0472">Membrane</keyword>
<keyword id="KW-0547">Nucleotide-binding</keyword>
<keyword id="KW-0592">Phosphate transport</keyword>
<keyword id="KW-1278">Translocase</keyword>
<keyword id="KW-0813">Transport</keyword>
<dbReference type="EC" id="7.3.2.1" evidence="1"/>
<dbReference type="EMBL" id="CP000001">
    <property type="protein sequence ID" value="AAU16249.1"/>
    <property type="molecule type" value="Genomic_DNA"/>
</dbReference>
<dbReference type="RefSeq" id="WP_000226683.1">
    <property type="nucleotide sequence ID" value="NZ_CP009968.1"/>
</dbReference>
<dbReference type="SMR" id="Q634R8"/>
<dbReference type="GeneID" id="93006830"/>
<dbReference type="KEGG" id="bcz:BCE33L4019"/>
<dbReference type="PATRIC" id="fig|288681.22.peg.1374"/>
<dbReference type="Proteomes" id="UP000002612">
    <property type="component" value="Chromosome"/>
</dbReference>
<dbReference type="GO" id="GO:0005886">
    <property type="term" value="C:plasma membrane"/>
    <property type="evidence" value="ECO:0007669"/>
    <property type="project" value="UniProtKB-SubCell"/>
</dbReference>
<dbReference type="GO" id="GO:0005524">
    <property type="term" value="F:ATP binding"/>
    <property type="evidence" value="ECO:0007669"/>
    <property type="project" value="UniProtKB-KW"/>
</dbReference>
<dbReference type="GO" id="GO:0016887">
    <property type="term" value="F:ATP hydrolysis activity"/>
    <property type="evidence" value="ECO:0007669"/>
    <property type="project" value="InterPro"/>
</dbReference>
<dbReference type="GO" id="GO:0015415">
    <property type="term" value="F:ATPase-coupled phosphate ion transmembrane transporter activity"/>
    <property type="evidence" value="ECO:0007669"/>
    <property type="project" value="UniProtKB-EC"/>
</dbReference>
<dbReference type="GO" id="GO:0035435">
    <property type="term" value="P:phosphate ion transmembrane transport"/>
    <property type="evidence" value="ECO:0007669"/>
    <property type="project" value="InterPro"/>
</dbReference>
<dbReference type="CDD" id="cd03260">
    <property type="entry name" value="ABC_PstB_phosphate_transporter"/>
    <property type="match status" value="1"/>
</dbReference>
<dbReference type="FunFam" id="3.40.50.300:FF:000132">
    <property type="entry name" value="Phosphate import ATP-binding protein PstB"/>
    <property type="match status" value="1"/>
</dbReference>
<dbReference type="Gene3D" id="3.40.50.300">
    <property type="entry name" value="P-loop containing nucleotide triphosphate hydrolases"/>
    <property type="match status" value="1"/>
</dbReference>
<dbReference type="InterPro" id="IPR003593">
    <property type="entry name" value="AAA+_ATPase"/>
</dbReference>
<dbReference type="InterPro" id="IPR003439">
    <property type="entry name" value="ABC_transporter-like_ATP-bd"/>
</dbReference>
<dbReference type="InterPro" id="IPR017871">
    <property type="entry name" value="ABC_transporter-like_CS"/>
</dbReference>
<dbReference type="InterPro" id="IPR027417">
    <property type="entry name" value="P-loop_NTPase"/>
</dbReference>
<dbReference type="InterPro" id="IPR005670">
    <property type="entry name" value="PstB-like"/>
</dbReference>
<dbReference type="NCBIfam" id="TIGR00972">
    <property type="entry name" value="3a0107s01c2"/>
    <property type="match status" value="1"/>
</dbReference>
<dbReference type="PANTHER" id="PTHR43423">
    <property type="entry name" value="ABC TRANSPORTER I FAMILY MEMBER 17"/>
    <property type="match status" value="1"/>
</dbReference>
<dbReference type="PANTHER" id="PTHR43423:SF1">
    <property type="entry name" value="ABC TRANSPORTER I FAMILY MEMBER 17"/>
    <property type="match status" value="1"/>
</dbReference>
<dbReference type="Pfam" id="PF00005">
    <property type="entry name" value="ABC_tran"/>
    <property type="match status" value="1"/>
</dbReference>
<dbReference type="SMART" id="SM00382">
    <property type="entry name" value="AAA"/>
    <property type="match status" value="1"/>
</dbReference>
<dbReference type="SUPFAM" id="SSF52540">
    <property type="entry name" value="P-loop containing nucleoside triphosphate hydrolases"/>
    <property type="match status" value="1"/>
</dbReference>
<dbReference type="PROSITE" id="PS00211">
    <property type="entry name" value="ABC_TRANSPORTER_1"/>
    <property type="match status" value="1"/>
</dbReference>
<dbReference type="PROSITE" id="PS50893">
    <property type="entry name" value="ABC_TRANSPORTER_2"/>
    <property type="match status" value="1"/>
</dbReference>
<dbReference type="PROSITE" id="PS51238">
    <property type="entry name" value="PSTB"/>
    <property type="match status" value="1"/>
</dbReference>
<accession>Q634R8</accession>
<protein>
    <recommendedName>
        <fullName evidence="1">Phosphate import ATP-binding protein PstB</fullName>
        <ecNumber evidence="1">7.3.2.1</ecNumber>
    </recommendedName>
    <alternativeName>
        <fullName evidence="1">ABC phosphate transporter</fullName>
    </alternativeName>
    <alternativeName>
        <fullName evidence="1">Phosphate-transporting ATPase</fullName>
    </alternativeName>
</protein>
<proteinExistence type="inferred from homology"/>
<reference key="1">
    <citation type="journal article" date="2006" name="J. Bacteriol.">
        <title>Pathogenomic sequence analysis of Bacillus cereus and Bacillus thuringiensis isolates closely related to Bacillus anthracis.</title>
        <authorList>
            <person name="Han C.S."/>
            <person name="Xie G."/>
            <person name="Challacombe J.F."/>
            <person name="Altherr M.R."/>
            <person name="Bhotika S.S."/>
            <person name="Bruce D."/>
            <person name="Campbell C.S."/>
            <person name="Campbell M.L."/>
            <person name="Chen J."/>
            <person name="Chertkov O."/>
            <person name="Cleland C."/>
            <person name="Dimitrijevic M."/>
            <person name="Doggett N.A."/>
            <person name="Fawcett J.J."/>
            <person name="Glavina T."/>
            <person name="Goodwin L.A."/>
            <person name="Hill K.K."/>
            <person name="Hitchcock P."/>
            <person name="Jackson P.J."/>
            <person name="Keim P."/>
            <person name="Kewalramani A.R."/>
            <person name="Longmire J."/>
            <person name="Lucas S."/>
            <person name="Malfatti S."/>
            <person name="McMurry K."/>
            <person name="Meincke L.J."/>
            <person name="Misra M."/>
            <person name="Moseman B.L."/>
            <person name="Mundt M."/>
            <person name="Munk A.C."/>
            <person name="Okinaka R.T."/>
            <person name="Parson-Quintana B."/>
            <person name="Reilly L.P."/>
            <person name="Richardson P."/>
            <person name="Robinson D.L."/>
            <person name="Rubin E."/>
            <person name="Saunders E."/>
            <person name="Tapia R."/>
            <person name="Tesmer J.G."/>
            <person name="Thayer N."/>
            <person name="Thompson L.S."/>
            <person name="Tice H."/>
            <person name="Ticknor L.O."/>
            <person name="Wills P.L."/>
            <person name="Brettin T.S."/>
            <person name="Gilna P."/>
        </authorList>
    </citation>
    <scope>NUCLEOTIDE SEQUENCE [LARGE SCALE GENOMIC DNA]</scope>
    <source>
        <strain>ZK / E33L</strain>
    </source>
</reference>
<evidence type="ECO:0000255" key="1">
    <source>
        <dbReference type="HAMAP-Rule" id="MF_01702"/>
    </source>
</evidence>
<organism>
    <name type="scientific">Bacillus cereus (strain ZK / E33L)</name>
    <dbReference type="NCBI Taxonomy" id="288681"/>
    <lineage>
        <taxon>Bacteria</taxon>
        <taxon>Bacillati</taxon>
        <taxon>Bacillota</taxon>
        <taxon>Bacilli</taxon>
        <taxon>Bacillales</taxon>
        <taxon>Bacillaceae</taxon>
        <taxon>Bacillus</taxon>
        <taxon>Bacillus cereus group</taxon>
    </lineage>
</organism>
<gene>
    <name evidence="1" type="primary">pstB</name>
    <name type="ordered locus">BCE33L4019</name>
</gene>
<sequence>MVATVVNVQVKNEEKIETAPKKVVFDTKNLNLWYGEDHALKDINLSIHENEVTAIIGPSGCGKSTYLKTLNRMVELVPIVRTTGVIEYRERNIFDKSYPVEELRTHVGMVFQKPNPFPKSIYENVAYGPKIHGISDKKTLDEIVEKSLRGAAIWDELKDRLHDNAYGLSGGQQQRLCIARCLAIEPDVILMDEPTSALDPISTLKVEELIQELKKDFSIVIVTHNMQQAARISDKTAFFLSGEVVEYTDTNKLFTTPSDKRTEDYITGRFG</sequence>
<comment type="function">
    <text evidence="1">Part of the ABC transporter complex PstSACB involved in phosphate import. Responsible for energy coupling to the transport system.</text>
</comment>
<comment type="catalytic activity">
    <reaction evidence="1">
        <text>phosphate(out) + ATP + H2O = ADP + 2 phosphate(in) + H(+)</text>
        <dbReference type="Rhea" id="RHEA:24440"/>
        <dbReference type="ChEBI" id="CHEBI:15377"/>
        <dbReference type="ChEBI" id="CHEBI:15378"/>
        <dbReference type="ChEBI" id="CHEBI:30616"/>
        <dbReference type="ChEBI" id="CHEBI:43474"/>
        <dbReference type="ChEBI" id="CHEBI:456216"/>
        <dbReference type="EC" id="7.3.2.1"/>
    </reaction>
</comment>
<comment type="subunit">
    <text evidence="1">The complex is composed of two ATP-binding proteins (PstB), two transmembrane proteins (PstC and PstA) and a solute-binding protein (PstS).</text>
</comment>
<comment type="subcellular location">
    <subcellularLocation>
        <location evidence="1">Cell membrane</location>
        <topology evidence="1">Peripheral membrane protein</topology>
    </subcellularLocation>
</comment>
<comment type="similarity">
    <text evidence="1">Belongs to the ABC transporter superfamily. Phosphate importer (TC 3.A.1.7) family.</text>
</comment>